<name>ARGB_STRGC</name>
<proteinExistence type="inferred from homology"/>
<dbReference type="EC" id="2.7.2.8" evidence="1"/>
<dbReference type="EMBL" id="CP000725">
    <property type="protein sequence ID" value="ABV09145.1"/>
    <property type="molecule type" value="Genomic_DNA"/>
</dbReference>
<dbReference type="RefSeq" id="WP_012130632.1">
    <property type="nucleotide sequence ID" value="NC_009785.1"/>
</dbReference>
<dbReference type="SMR" id="A8AYI5"/>
<dbReference type="STRING" id="467705.SGO_1567"/>
<dbReference type="KEGG" id="sgo:SGO_1567"/>
<dbReference type="eggNOG" id="COG0548">
    <property type="taxonomic scope" value="Bacteria"/>
</dbReference>
<dbReference type="HOGENOM" id="CLU_053680_1_0_9"/>
<dbReference type="UniPathway" id="UPA00068">
    <property type="reaction ID" value="UER00107"/>
</dbReference>
<dbReference type="Proteomes" id="UP000001131">
    <property type="component" value="Chromosome"/>
</dbReference>
<dbReference type="GO" id="GO:0005737">
    <property type="term" value="C:cytoplasm"/>
    <property type="evidence" value="ECO:0007669"/>
    <property type="project" value="UniProtKB-SubCell"/>
</dbReference>
<dbReference type="GO" id="GO:0003991">
    <property type="term" value="F:acetylglutamate kinase activity"/>
    <property type="evidence" value="ECO:0007669"/>
    <property type="project" value="UniProtKB-UniRule"/>
</dbReference>
<dbReference type="GO" id="GO:0005524">
    <property type="term" value="F:ATP binding"/>
    <property type="evidence" value="ECO:0007669"/>
    <property type="project" value="UniProtKB-UniRule"/>
</dbReference>
<dbReference type="GO" id="GO:0042450">
    <property type="term" value="P:arginine biosynthetic process via ornithine"/>
    <property type="evidence" value="ECO:0007669"/>
    <property type="project" value="UniProtKB-UniRule"/>
</dbReference>
<dbReference type="GO" id="GO:0006526">
    <property type="term" value="P:L-arginine biosynthetic process"/>
    <property type="evidence" value="ECO:0007669"/>
    <property type="project" value="UniProtKB-UniPathway"/>
</dbReference>
<dbReference type="CDD" id="cd04238">
    <property type="entry name" value="AAK_NAGK-like"/>
    <property type="match status" value="1"/>
</dbReference>
<dbReference type="Gene3D" id="3.40.1160.10">
    <property type="entry name" value="Acetylglutamate kinase-like"/>
    <property type="match status" value="1"/>
</dbReference>
<dbReference type="HAMAP" id="MF_00082">
    <property type="entry name" value="ArgB"/>
    <property type="match status" value="1"/>
</dbReference>
<dbReference type="InterPro" id="IPR036393">
    <property type="entry name" value="AceGlu_kinase-like_sf"/>
</dbReference>
<dbReference type="InterPro" id="IPR004662">
    <property type="entry name" value="AcgluKinase_fam"/>
</dbReference>
<dbReference type="InterPro" id="IPR037528">
    <property type="entry name" value="ArgB"/>
</dbReference>
<dbReference type="InterPro" id="IPR001048">
    <property type="entry name" value="Asp/Glu/Uridylate_kinase"/>
</dbReference>
<dbReference type="InterPro" id="IPR001057">
    <property type="entry name" value="Glu/AcGlu_kinase"/>
</dbReference>
<dbReference type="NCBIfam" id="TIGR00761">
    <property type="entry name" value="argB"/>
    <property type="match status" value="1"/>
</dbReference>
<dbReference type="PANTHER" id="PTHR23342">
    <property type="entry name" value="N-ACETYLGLUTAMATE SYNTHASE"/>
    <property type="match status" value="1"/>
</dbReference>
<dbReference type="PANTHER" id="PTHR23342:SF0">
    <property type="entry name" value="N-ACETYLGLUTAMATE SYNTHASE, MITOCHONDRIAL"/>
    <property type="match status" value="1"/>
</dbReference>
<dbReference type="Pfam" id="PF00696">
    <property type="entry name" value="AA_kinase"/>
    <property type="match status" value="1"/>
</dbReference>
<dbReference type="PIRSF" id="PIRSF000728">
    <property type="entry name" value="NAGK"/>
    <property type="match status" value="1"/>
</dbReference>
<dbReference type="PRINTS" id="PR00474">
    <property type="entry name" value="GLU5KINASE"/>
</dbReference>
<dbReference type="SUPFAM" id="SSF53633">
    <property type="entry name" value="Carbamate kinase-like"/>
    <property type="match status" value="1"/>
</dbReference>
<feature type="chain" id="PRO_1000075324" description="Acetylglutamate kinase">
    <location>
        <begin position="1"/>
        <end position="245"/>
    </location>
</feature>
<feature type="binding site" evidence="1">
    <location>
        <begin position="41"/>
        <end position="42"/>
    </location>
    <ligand>
        <name>substrate</name>
    </ligand>
</feature>
<feature type="binding site" evidence="1">
    <location>
        <position position="63"/>
    </location>
    <ligand>
        <name>substrate</name>
    </ligand>
</feature>
<feature type="binding site" evidence="1">
    <location>
        <position position="156"/>
    </location>
    <ligand>
        <name>substrate</name>
    </ligand>
</feature>
<feature type="site" description="Transition state stabilizer" evidence="1">
    <location>
        <position position="8"/>
    </location>
</feature>
<feature type="site" description="Transition state stabilizer" evidence="1">
    <location>
        <position position="215"/>
    </location>
</feature>
<evidence type="ECO:0000255" key="1">
    <source>
        <dbReference type="HAMAP-Rule" id="MF_00082"/>
    </source>
</evidence>
<reference key="1">
    <citation type="journal article" date="2007" name="J. Bacteriol.">
        <title>Genome-wide transcriptional changes in Streptococcus gordonii in response to competence signaling peptide.</title>
        <authorList>
            <person name="Vickerman M.M."/>
            <person name="Iobst S."/>
            <person name="Jesionowski A.M."/>
            <person name="Gill S.R."/>
        </authorList>
    </citation>
    <scope>NUCLEOTIDE SEQUENCE [LARGE SCALE GENOMIC DNA]</scope>
    <source>
        <strain>Challis / ATCC 35105 / BCRC 15272 / CH1 / DL1 / V288</strain>
    </source>
</reference>
<protein>
    <recommendedName>
        <fullName evidence="1">Acetylglutamate kinase</fullName>
        <ecNumber evidence="1">2.7.2.8</ecNumber>
    </recommendedName>
    <alternativeName>
        <fullName evidence="1">N-acetyl-L-glutamate 5-phosphotransferase</fullName>
    </alternativeName>
    <alternativeName>
        <fullName evidence="1">NAG kinase</fullName>
        <shortName evidence="1">NAGK</shortName>
    </alternativeName>
</protein>
<organism>
    <name type="scientific">Streptococcus gordonii (strain Challis / ATCC 35105 / BCRC 15272 / CH1 / DL1 / V288)</name>
    <dbReference type="NCBI Taxonomy" id="467705"/>
    <lineage>
        <taxon>Bacteria</taxon>
        <taxon>Bacillati</taxon>
        <taxon>Bacillota</taxon>
        <taxon>Bacilli</taxon>
        <taxon>Lactobacillales</taxon>
        <taxon>Streptococcaceae</taxon>
        <taxon>Streptococcus</taxon>
    </lineage>
</organism>
<gene>
    <name evidence="1" type="primary">argB</name>
    <name type="ordered locus">SGO_1567</name>
</gene>
<comment type="function">
    <text evidence="1">Catalyzes the ATP-dependent phosphorylation of N-acetyl-L-glutamate.</text>
</comment>
<comment type="catalytic activity">
    <reaction evidence="1">
        <text>N-acetyl-L-glutamate + ATP = N-acetyl-L-glutamyl 5-phosphate + ADP</text>
        <dbReference type="Rhea" id="RHEA:14629"/>
        <dbReference type="ChEBI" id="CHEBI:30616"/>
        <dbReference type="ChEBI" id="CHEBI:44337"/>
        <dbReference type="ChEBI" id="CHEBI:57936"/>
        <dbReference type="ChEBI" id="CHEBI:456216"/>
        <dbReference type="EC" id="2.7.2.8"/>
    </reaction>
</comment>
<comment type="pathway">
    <text evidence="1">Amino-acid biosynthesis; L-arginine biosynthesis; N(2)-acetyl-L-ornithine from L-glutamate: step 2/4.</text>
</comment>
<comment type="subcellular location">
    <subcellularLocation>
        <location evidence="1">Cytoplasm</location>
    </subcellularLocation>
</comment>
<comment type="similarity">
    <text evidence="1">Belongs to the acetylglutamate kinase family. ArgB subfamily.</text>
</comment>
<keyword id="KW-0028">Amino-acid biosynthesis</keyword>
<keyword id="KW-0055">Arginine biosynthesis</keyword>
<keyword id="KW-0067">ATP-binding</keyword>
<keyword id="KW-0963">Cytoplasm</keyword>
<keyword id="KW-0418">Kinase</keyword>
<keyword id="KW-0547">Nucleotide-binding</keyword>
<keyword id="KW-1185">Reference proteome</keyword>
<keyword id="KW-0808">Transferase</keyword>
<sequence length="245" mass="26119">MKDVIVIKIGGVAAKKLSDKFIKQMQEWIAAGKKIVVVHGGGLVINQLMKERQLPTRKVKGLRVTAKSDLPIIQQALLGQVGRTLTQELNYSDIESLQLVSHLGKTVSADFIDKDVYGYVGQVKAIQTAYLEQLLAADIVPVLASLGENAAGELLNINADYLAAAVASSLQAEKLILMTDIEGVLEDKKVLPQILTSQVSKKIQTGVIKGGMIPKIESAVQTVLSGVGQVLIGDNLLTGTLIAEG</sequence>
<accession>A8AYI5</accession>